<organism>
    <name type="scientific">Cuscuta reflexa</name>
    <name type="common">Southern Asian dodder</name>
    <dbReference type="NCBI Taxonomy" id="4129"/>
    <lineage>
        <taxon>Eukaryota</taxon>
        <taxon>Viridiplantae</taxon>
        <taxon>Streptophyta</taxon>
        <taxon>Embryophyta</taxon>
        <taxon>Tracheophyta</taxon>
        <taxon>Spermatophyta</taxon>
        <taxon>Magnoliopsida</taxon>
        <taxon>eudicotyledons</taxon>
        <taxon>Gunneridae</taxon>
        <taxon>Pentapetalae</taxon>
        <taxon>asterids</taxon>
        <taxon>lamiids</taxon>
        <taxon>Solanales</taxon>
        <taxon>Convolvulaceae</taxon>
        <taxon>Cuscuteae</taxon>
        <taxon>Cuscuta</taxon>
        <taxon>Cuscuta subgen. Monogynella</taxon>
    </lineage>
</organism>
<keyword id="KW-0249">Electron transport</keyword>
<keyword id="KW-0472">Membrane</keyword>
<keyword id="KW-0602">Photosynthesis</keyword>
<keyword id="KW-0934">Plastid</keyword>
<keyword id="KW-0793">Thylakoid</keyword>
<keyword id="KW-0812">Transmembrane</keyword>
<keyword id="KW-1133">Transmembrane helix</keyword>
<keyword id="KW-0813">Transport</keyword>
<feature type="chain" id="PRO_0000216378" description="Cytochrome b6-f complex subunit 5">
    <location>
        <begin position="1"/>
        <end position="37"/>
    </location>
</feature>
<feature type="transmembrane region" description="Helical" evidence="1">
    <location>
        <begin position="5"/>
        <end position="25"/>
    </location>
</feature>
<dbReference type="EMBL" id="X61698">
    <property type="protein sequence ID" value="CAA43864.1"/>
    <property type="molecule type" value="Genomic_DNA"/>
</dbReference>
<dbReference type="EMBL" id="AM711640">
    <property type="protein sequence ID" value="CAM98410.1"/>
    <property type="molecule type" value="Genomic_DNA"/>
</dbReference>
<dbReference type="PIR" id="S20474">
    <property type="entry name" value="S20474"/>
</dbReference>
<dbReference type="RefSeq" id="YP_001430124.1">
    <property type="nucleotide sequence ID" value="NC_009766.1"/>
</dbReference>
<dbReference type="SMR" id="P30398"/>
<dbReference type="GeneID" id="5536701"/>
<dbReference type="GO" id="GO:0009512">
    <property type="term" value="C:cytochrome b6f complex"/>
    <property type="evidence" value="ECO:0007669"/>
    <property type="project" value="InterPro"/>
</dbReference>
<dbReference type="GO" id="GO:0055035">
    <property type="term" value="C:plastid thylakoid membrane"/>
    <property type="evidence" value="ECO:0007669"/>
    <property type="project" value="UniProtKB-SubCell"/>
</dbReference>
<dbReference type="GO" id="GO:0045158">
    <property type="term" value="F:electron transporter, transferring electrons within cytochrome b6/f complex of photosystem II activity"/>
    <property type="evidence" value="ECO:0007669"/>
    <property type="project" value="UniProtKB-UniRule"/>
</dbReference>
<dbReference type="GO" id="GO:0017004">
    <property type="term" value="P:cytochrome complex assembly"/>
    <property type="evidence" value="ECO:0007669"/>
    <property type="project" value="UniProtKB-UniRule"/>
</dbReference>
<dbReference type="GO" id="GO:0015979">
    <property type="term" value="P:photosynthesis"/>
    <property type="evidence" value="ECO:0007669"/>
    <property type="project" value="UniProtKB-KW"/>
</dbReference>
<dbReference type="HAMAP" id="MF_00432">
    <property type="entry name" value="Cytb6_f_PetG"/>
    <property type="match status" value="1"/>
</dbReference>
<dbReference type="InterPro" id="IPR003683">
    <property type="entry name" value="Cyt_6/f_cplx_su5"/>
</dbReference>
<dbReference type="InterPro" id="IPR036099">
    <property type="entry name" value="Cyt_6/f_cplx_su5_sf"/>
</dbReference>
<dbReference type="NCBIfam" id="NF001907">
    <property type="entry name" value="PRK00665.1"/>
    <property type="match status" value="1"/>
</dbReference>
<dbReference type="Pfam" id="PF02529">
    <property type="entry name" value="PetG"/>
    <property type="match status" value="1"/>
</dbReference>
<dbReference type="PIRSF" id="PIRSF000034">
    <property type="entry name" value="Cyt_b6-f_V"/>
    <property type="match status" value="1"/>
</dbReference>
<dbReference type="SUPFAM" id="SSF103446">
    <property type="entry name" value="PetG subunit of the cytochrome b6f complex"/>
    <property type="match status" value="1"/>
</dbReference>
<gene>
    <name evidence="1" type="primary">petG</name>
</gene>
<geneLocation type="plastid"/>
<proteinExistence type="inferred from homology"/>
<protein>
    <recommendedName>
        <fullName evidence="1">Cytochrome b6-f complex subunit 5</fullName>
    </recommendedName>
    <alternativeName>
        <fullName evidence="1">Cytochrome b6-f complex subunit PetG</fullName>
    </alternativeName>
    <alternativeName>
        <fullName evidence="1">Cytochrome b6-f complex subunit V</fullName>
    </alternativeName>
</protein>
<evidence type="ECO:0000255" key="1">
    <source>
        <dbReference type="HAMAP-Rule" id="MF_00432"/>
    </source>
</evidence>
<evidence type="ECO:0000305" key="2"/>
<name>PETG_CUSRE</name>
<accession>P30398</accession>
<accession>A7M982</accession>
<reference key="1">
    <citation type="journal article" date="1992" name="Mol. Gen. Genet.">
        <title>Organization and sequence of photosynthetic genes from the plastid genome of the holoparasitic flowering plant Cuscuta reflexa.</title>
        <authorList>
            <person name="Haberhausen G."/>
            <person name="Valentin K.-U."/>
            <person name="Zetsche K."/>
        </authorList>
    </citation>
    <scope>NUCLEOTIDE SEQUENCE [GENOMIC DNA]</scope>
    <source>
        <strain>ROXB</strain>
    </source>
</reference>
<reference key="2">
    <citation type="journal article" date="2007" name="BMC Plant Biol.">
        <title>Complete DNA sequences of the plastid genomes of two parasitic flowering plant species, Cuscuta reflexa and Cuscuta gronovii.</title>
        <authorList>
            <person name="Funk H.T."/>
            <person name="Berg S."/>
            <person name="Krupinska K."/>
            <person name="Maier U.-G."/>
            <person name="Krause K."/>
        </authorList>
    </citation>
    <scope>NUCLEOTIDE SEQUENCE [LARGE SCALE GENOMIC DNA]</scope>
</reference>
<comment type="function">
    <text evidence="1">Component of the cytochrome b6-f complex, which mediates electron transfer between photosystem II (PSII) and photosystem I (PSI), cyclic electron flow around PSI, and state transitions. PetG is required for either the stability or assembly of the cytochrome b6-f complex.</text>
</comment>
<comment type="subunit">
    <text evidence="1">The 4 large subunits of the cytochrome b6-f complex are cytochrome b6, subunit IV (17 kDa polypeptide, PetD), cytochrome f and the Rieske protein, while the 4 small subunits are PetG, PetL, PetM and PetN. The complex functions as a dimer.</text>
</comment>
<comment type="subcellular location">
    <subcellularLocation>
        <location evidence="2">Plastid thylakoid membrane</location>
        <topology evidence="1">Single-pass membrane protein</topology>
    </subcellularLocation>
</comment>
<comment type="similarity">
    <text evidence="1">Belongs to the PetG family.</text>
</comment>
<comment type="caution">
    <text evidence="2">Young tissue from this organism is photosynthetic and contains some thylakoids, although the photosynthetic activity does not exceed the light compensation point.</text>
</comment>
<sequence length="37" mass="4126">MIEVFLFGIVLGLIPITLAGLFVTAYLQYRRGGRLDV</sequence>